<gene>
    <name evidence="1" type="primary">murG</name>
    <name type="ordered locus">HAPS_0119</name>
</gene>
<reference key="1">
    <citation type="journal article" date="2009" name="J. Bacteriol.">
        <title>Complete genome sequence of Haemophilus parasuis SH0165.</title>
        <authorList>
            <person name="Yue M."/>
            <person name="Yang F."/>
            <person name="Yang J."/>
            <person name="Bei W."/>
            <person name="Cai X."/>
            <person name="Chen L."/>
            <person name="Dong J."/>
            <person name="Zhou R."/>
            <person name="Jin M."/>
            <person name="Jin Q."/>
            <person name="Chen H."/>
        </authorList>
    </citation>
    <scope>NUCLEOTIDE SEQUENCE [LARGE SCALE GENOMIC DNA]</scope>
    <source>
        <strain>SH0165</strain>
    </source>
</reference>
<feature type="chain" id="PRO_1000192132" description="UDP-N-acetylglucosamine--N-acetylmuramyl-(pentapeptide) pyrophosphoryl-undecaprenol N-acetylglucosamine transferase">
    <location>
        <begin position="1"/>
        <end position="351"/>
    </location>
</feature>
<feature type="binding site" evidence="1">
    <location>
        <begin position="12"/>
        <end position="14"/>
    </location>
    <ligand>
        <name>UDP-N-acetyl-alpha-D-glucosamine</name>
        <dbReference type="ChEBI" id="CHEBI:57705"/>
    </ligand>
</feature>
<feature type="binding site" evidence="1">
    <location>
        <position position="124"/>
    </location>
    <ligand>
        <name>UDP-N-acetyl-alpha-D-glucosamine</name>
        <dbReference type="ChEBI" id="CHEBI:57705"/>
    </ligand>
</feature>
<feature type="binding site" evidence="1">
    <location>
        <position position="160"/>
    </location>
    <ligand>
        <name>UDP-N-acetyl-alpha-D-glucosamine</name>
        <dbReference type="ChEBI" id="CHEBI:57705"/>
    </ligand>
</feature>
<feature type="binding site" evidence="1">
    <location>
        <position position="188"/>
    </location>
    <ligand>
        <name>UDP-N-acetyl-alpha-D-glucosamine</name>
        <dbReference type="ChEBI" id="CHEBI:57705"/>
    </ligand>
</feature>
<feature type="binding site" evidence="1">
    <location>
        <position position="239"/>
    </location>
    <ligand>
        <name>UDP-N-acetyl-alpha-D-glucosamine</name>
        <dbReference type="ChEBI" id="CHEBI:57705"/>
    </ligand>
</feature>
<feature type="binding site" evidence="1">
    <location>
        <begin position="258"/>
        <end position="263"/>
    </location>
    <ligand>
        <name>UDP-N-acetyl-alpha-D-glucosamine</name>
        <dbReference type="ChEBI" id="CHEBI:57705"/>
    </ligand>
</feature>
<feature type="binding site" evidence="1">
    <location>
        <position position="283"/>
    </location>
    <ligand>
        <name>UDP-N-acetyl-alpha-D-glucosamine</name>
        <dbReference type="ChEBI" id="CHEBI:57705"/>
    </ligand>
</feature>
<comment type="function">
    <text evidence="1">Cell wall formation. Catalyzes the transfer of a GlcNAc subunit on undecaprenyl-pyrophosphoryl-MurNAc-pentapeptide (lipid intermediate I) to form undecaprenyl-pyrophosphoryl-MurNAc-(pentapeptide)GlcNAc (lipid intermediate II).</text>
</comment>
<comment type="catalytic activity">
    <reaction evidence="1">
        <text>di-trans,octa-cis-undecaprenyl diphospho-N-acetyl-alpha-D-muramoyl-L-alanyl-D-glutamyl-meso-2,6-diaminopimeloyl-D-alanyl-D-alanine + UDP-N-acetyl-alpha-D-glucosamine = di-trans,octa-cis-undecaprenyl diphospho-[N-acetyl-alpha-D-glucosaminyl-(1-&gt;4)]-N-acetyl-alpha-D-muramoyl-L-alanyl-D-glutamyl-meso-2,6-diaminopimeloyl-D-alanyl-D-alanine + UDP + H(+)</text>
        <dbReference type="Rhea" id="RHEA:31227"/>
        <dbReference type="ChEBI" id="CHEBI:15378"/>
        <dbReference type="ChEBI" id="CHEBI:57705"/>
        <dbReference type="ChEBI" id="CHEBI:58223"/>
        <dbReference type="ChEBI" id="CHEBI:61387"/>
        <dbReference type="ChEBI" id="CHEBI:61388"/>
        <dbReference type="EC" id="2.4.1.227"/>
    </reaction>
</comment>
<comment type="pathway">
    <text evidence="1">Cell wall biogenesis; peptidoglycan biosynthesis.</text>
</comment>
<comment type="subcellular location">
    <subcellularLocation>
        <location evidence="1">Cell inner membrane</location>
        <topology evidence="1">Peripheral membrane protein</topology>
        <orientation evidence="1">Cytoplasmic side</orientation>
    </subcellularLocation>
</comment>
<comment type="similarity">
    <text evidence="1">Belongs to the glycosyltransferase 28 family. MurG subfamily.</text>
</comment>
<protein>
    <recommendedName>
        <fullName evidence="1">UDP-N-acetylglucosamine--N-acetylmuramyl-(pentapeptide) pyrophosphoryl-undecaprenol N-acetylglucosamine transferase</fullName>
        <ecNumber evidence="1">2.4.1.227</ecNumber>
    </recommendedName>
    <alternativeName>
        <fullName evidence="1">Undecaprenyl-PP-MurNAc-pentapeptide-UDPGlcNAc GlcNAc transferase</fullName>
    </alternativeName>
</protein>
<sequence length="351" mass="37745">MTKKLLVMAGGTGGHVFPAIAVVRELQQQGWEIRWLGTKDRMEADLVPKHGIPIEFIQISGLKGKGIKALLTAPFAILRAVLQAKKIINAYKPDAVLGMGGYVSGPGGIAAKLCGVPVILHEQNAVVGLTNVWLSKIARRTLQAFPTAFPNAEVVGNPVRQDLFEIAPPEQRFAEKGYPINILVMGGSQGALVINKTVLEVAKVLGQNVFISHQVGKGKLAGVEEVYQATGNGIASEFIDDMKAAYEWADLVICRSGALTVCEIAAAGLPAIFVPFQHKDRQQFLNAEYLAQVGAAMIIEQQDFTPESLLKALEPLIADRQKLTEMAIKARAKATPLAAKRVAEVIVENSL</sequence>
<proteinExistence type="inferred from homology"/>
<evidence type="ECO:0000255" key="1">
    <source>
        <dbReference type="HAMAP-Rule" id="MF_00033"/>
    </source>
</evidence>
<name>MURG_GLAP5</name>
<keyword id="KW-0131">Cell cycle</keyword>
<keyword id="KW-0132">Cell division</keyword>
<keyword id="KW-0997">Cell inner membrane</keyword>
<keyword id="KW-1003">Cell membrane</keyword>
<keyword id="KW-0133">Cell shape</keyword>
<keyword id="KW-0961">Cell wall biogenesis/degradation</keyword>
<keyword id="KW-0328">Glycosyltransferase</keyword>
<keyword id="KW-0472">Membrane</keyword>
<keyword id="KW-0573">Peptidoglycan synthesis</keyword>
<keyword id="KW-1185">Reference proteome</keyword>
<keyword id="KW-0808">Transferase</keyword>
<dbReference type="EC" id="2.4.1.227" evidence="1"/>
<dbReference type="EMBL" id="CP001321">
    <property type="protein sequence ID" value="ACL31818.1"/>
    <property type="molecule type" value="Genomic_DNA"/>
</dbReference>
<dbReference type="RefSeq" id="WP_012621563.1">
    <property type="nucleotide sequence ID" value="NC_011852.1"/>
</dbReference>
<dbReference type="SMR" id="B8F3B6"/>
<dbReference type="STRING" id="557723.HAPS_0119"/>
<dbReference type="CAZy" id="GT28">
    <property type="family name" value="Glycosyltransferase Family 28"/>
</dbReference>
<dbReference type="KEGG" id="hap:HAPS_0119"/>
<dbReference type="HOGENOM" id="CLU_037404_2_0_6"/>
<dbReference type="UniPathway" id="UPA00219"/>
<dbReference type="Proteomes" id="UP000006743">
    <property type="component" value="Chromosome"/>
</dbReference>
<dbReference type="GO" id="GO:0005886">
    <property type="term" value="C:plasma membrane"/>
    <property type="evidence" value="ECO:0007669"/>
    <property type="project" value="UniProtKB-SubCell"/>
</dbReference>
<dbReference type="GO" id="GO:0051991">
    <property type="term" value="F:UDP-N-acetyl-D-glucosamine:N-acetylmuramoyl-L-alanyl-D-glutamyl-meso-2,6-diaminopimelyl-D-alanyl-D-alanine-diphosphoundecaprenol 4-beta-N-acetylglucosaminlytransferase activity"/>
    <property type="evidence" value="ECO:0007669"/>
    <property type="project" value="RHEA"/>
</dbReference>
<dbReference type="GO" id="GO:0050511">
    <property type="term" value="F:undecaprenyldiphospho-muramoylpentapeptide beta-N-acetylglucosaminyltransferase activity"/>
    <property type="evidence" value="ECO:0007669"/>
    <property type="project" value="UniProtKB-UniRule"/>
</dbReference>
<dbReference type="GO" id="GO:0005975">
    <property type="term" value="P:carbohydrate metabolic process"/>
    <property type="evidence" value="ECO:0007669"/>
    <property type="project" value="InterPro"/>
</dbReference>
<dbReference type="GO" id="GO:0051301">
    <property type="term" value="P:cell division"/>
    <property type="evidence" value="ECO:0007669"/>
    <property type="project" value="UniProtKB-KW"/>
</dbReference>
<dbReference type="GO" id="GO:0071555">
    <property type="term" value="P:cell wall organization"/>
    <property type="evidence" value="ECO:0007669"/>
    <property type="project" value="UniProtKB-KW"/>
</dbReference>
<dbReference type="GO" id="GO:0030259">
    <property type="term" value="P:lipid glycosylation"/>
    <property type="evidence" value="ECO:0007669"/>
    <property type="project" value="UniProtKB-UniRule"/>
</dbReference>
<dbReference type="GO" id="GO:0009252">
    <property type="term" value="P:peptidoglycan biosynthetic process"/>
    <property type="evidence" value="ECO:0007669"/>
    <property type="project" value="UniProtKB-UniRule"/>
</dbReference>
<dbReference type="GO" id="GO:0008360">
    <property type="term" value="P:regulation of cell shape"/>
    <property type="evidence" value="ECO:0007669"/>
    <property type="project" value="UniProtKB-KW"/>
</dbReference>
<dbReference type="CDD" id="cd03785">
    <property type="entry name" value="GT28_MurG"/>
    <property type="match status" value="1"/>
</dbReference>
<dbReference type="Gene3D" id="3.40.50.2000">
    <property type="entry name" value="Glycogen Phosphorylase B"/>
    <property type="match status" value="2"/>
</dbReference>
<dbReference type="HAMAP" id="MF_00033">
    <property type="entry name" value="MurG"/>
    <property type="match status" value="1"/>
</dbReference>
<dbReference type="InterPro" id="IPR006009">
    <property type="entry name" value="GlcNAc_MurG"/>
</dbReference>
<dbReference type="InterPro" id="IPR007235">
    <property type="entry name" value="Glyco_trans_28_C"/>
</dbReference>
<dbReference type="InterPro" id="IPR004276">
    <property type="entry name" value="GlycoTrans_28_N"/>
</dbReference>
<dbReference type="NCBIfam" id="TIGR01133">
    <property type="entry name" value="murG"/>
    <property type="match status" value="1"/>
</dbReference>
<dbReference type="PANTHER" id="PTHR21015:SF22">
    <property type="entry name" value="GLYCOSYLTRANSFERASE"/>
    <property type="match status" value="1"/>
</dbReference>
<dbReference type="PANTHER" id="PTHR21015">
    <property type="entry name" value="UDP-N-ACETYLGLUCOSAMINE--N-ACETYLMURAMYL-(PENTAPEPTIDE) PYROPHOSPHORYL-UNDECAPRENOL N-ACETYLGLUCOSAMINE TRANSFERASE 1"/>
    <property type="match status" value="1"/>
</dbReference>
<dbReference type="Pfam" id="PF04101">
    <property type="entry name" value="Glyco_tran_28_C"/>
    <property type="match status" value="1"/>
</dbReference>
<dbReference type="Pfam" id="PF03033">
    <property type="entry name" value="Glyco_transf_28"/>
    <property type="match status" value="1"/>
</dbReference>
<dbReference type="SUPFAM" id="SSF53756">
    <property type="entry name" value="UDP-Glycosyltransferase/glycogen phosphorylase"/>
    <property type="match status" value="1"/>
</dbReference>
<organism>
    <name type="scientific">Glaesserella parasuis serovar 5 (strain SH0165)</name>
    <name type="common">Haemophilus parasuis</name>
    <dbReference type="NCBI Taxonomy" id="557723"/>
    <lineage>
        <taxon>Bacteria</taxon>
        <taxon>Pseudomonadati</taxon>
        <taxon>Pseudomonadota</taxon>
        <taxon>Gammaproteobacteria</taxon>
        <taxon>Pasteurellales</taxon>
        <taxon>Pasteurellaceae</taxon>
        <taxon>Glaesserella</taxon>
    </lineage>
</organism>
<accession>B8F3B6</accession>